<evidence type="ECO:0000255" key="1">
    <source>
        <dbReference type="HAMAP-Rule" id="MF_01843"/>
    </source>
</evidence>
<reference key="1">
    <citation type="submission" date="2005-08" db="EMBL/GenBank/DDBJ databases">
        <title>Complete sequence of Synechococcus sp. CC9902.</title>
        <authorList>
            <person name="Copeland A."/>
            <person name="Lucas S."/>
            <person name="Lapidus A."/>
            <person name="Barry K."/>
            <person name="Detter J.C."/>
            <person name="Glavina T."/>
            <person name="Hammon N."/>
            <person name="Israni S."/>
            <person name="Pitluck S."/>
            <person name="Martinez M."/>
            <person name="Schmutz J."/>
            <person name="Larimer F."/>
            <person name="Land M."/>
            <person name="Kyrpides N."/>
            <person name="Ivanova N."/>
            <person name="Richardson P."/>
        </authorList>
    </citation>
    <scope>NUCLEOTIDE SEQUENCE [LARGE SCALE GENOMIC DNA]</scope>
    <source>
        <strain>CC9902</strain>
    </source>
</reference>
<comment type="function">
    <text evidence="1">May be involved in photosynthetic membrane biogenesis.</text>
</comment>
<comment type="similarity">
    <text evidence="1">Belongs to the THF1 family.</text>
</comment>
<name>THF1_SYNS9</name>
<keyword id="KW-0175">Coiled coil</keyword>
<keyword id="KW-1185">Reference proteome</keyword>
<sequence>MGERQTIADSKRAFHQAFPHVIAPLYRRLADELLVELHLLSHQSSFKTTPLFAVGLCTVFDTFSAGYRPEEHITGLLDALCSSNGYDANTFRKESKRCIDAAKTESVDAMDSHLAGQKLGEGSHYSRLMAIGVLRLFEEAKGDADQPDEADLRKRCKELSTALNFPAERVEKDLSLFASNSERMSAAIELVQETIAAERRKKERRQAEQAQRSES</sequence>
<accession>Q3AY05</accession>
<proteinExistence type="inferred from homology"/>
<organism>
    <name type="scientific">Synechococcus sp. (strain CC9902)</name>
    <dbReference type="NCBI Taxonomy" id="316279"/>
    <lineage>
        <taxon>Bacteria</taxon>
        <taxon>Bacillati</taxon>
        <taxon>Cyanobacteriota</taxon>
        <taxon>Cyanophyceae</taxon>
        <taxon>Synechococcales</taxon>
        <taxon>Synechococcaceae</taxon>
        <taxon>Synechococcus</taxon>
    </lineage>
</organism>
<dbReference type="EMBL" id="CP000097">
    <property type="protein sequence ID" value="ABB26022.1"/>
    <property type="molecule type" value="Genomic_DNA"/>
</dbReference>
<dbReference type="RefSeq" id="WP_011359855.1">
    <property type="nucleotide sequence ID" value="NC_007513.1"/>
</dbReference>
<dbReference type="SMR" id="Q3AY05"/>
<dbReference type="STRING" id="316279.Syncc9902_1058"/>
<dbReference type="KEGG" id="sye:Syncc9902_1058"/>
<dbReference type="eggNOG" id="ENOG502Z86M">
    <property type="taxonomic scope" value="Bacteria"/>
</dbReference>
<dbReference type="HOGENOM" id="CLU_079763_1_0_3"/>
<dbReference type="OrthoDB" id="463078at2"/>
<dbReference type="Proteomes" id="UP000002712">
    <property type="component" value="Chromosome"/>
</dbReference>
<dbReference type="GO" id="GO:0030096">
    <property type="term" value="C:plasma membrane-derived thylakoid photosystem II"/>
    <property type="evidence" value="ECO:0007669"/>
    <property type="project" value="TreeGrafter"/>
</dbReference>
<dbReference type="GO" id="GO:0010207">
    <property type="term" value="P:photosystem II assembly"/>
    <property type="evidence" value="ECO:0007669"/>
    <property type="project" value="InterPro"/>
</dbReference>
<dbReference type="HAMAP" id="MF_01843">
    <property type="entry name" value="Thf1"/>
    <property type="match status" value="1"/>
</dbReference>
<dbReference type="InterPro" id="IPR017499">
    <property type="entry name" value="Thf1"/>
</dbReference>
<dbReference type="NCBIfam" id="TIGR03060">
    <property type="entry name" value="PS_II_psb29"/>
    <property type="match status" value="1"/>
</dbReference>
<dbReference type="PANTHER" id="PTHR34793">
    <property type="entry name" value="PROTEIN THYLAKOID FORMATION 1, CHLOROPLASTIC"/>
    <property type="match status" value="1"/>
</dbReference>
<dbReference type="PANTHER" id="PTHR34793:SF1">
    <property type="entry name" value="PROTEIN THYLAKOID FORMATION 1, CHLOROPLASTIC"/>
    <property type="match status" value="1"/>
</dbReference>
<dbReference type="Pfam" id="PF11264">
    <property type="entry name" value="ThylakoidFormat"/>
    <property type="match status" value="1"/>
</dbReference>
<feature type="chain" id="PRO_0000235224" description="Protein Thf1">
    <location>
        <begin position="1"/>
        <end position="215"/>
    </location>
</feature>
<feature type="coiled-coil region" evidence="1">
    <location>
        <begin position="188"/>
        <end position="209"/>
    </location>
</feature>
<protein>
    <recommendedName>
        <fullName evidence="1">Protein Thf1</fullName>
    </recommendedName>
</protein>
<gene>
    <name evidence="1" type="primary">thf1</name>
    <name type="ordered locus">Syncc9902_1058</name>
</gene>